<protein>
    <recommendedName>
        <fullName evidence="1">Multifunctional CCA protein</fullName>
    </recommendedName>
    <domain>
        <recommendedName>
            <fullName evidence="1">CCA-adding enzyme</fullName>
            <ecNumber evidence="1">2.7.7.72</ecNumber>
        </recommendedName>
        <alternativeName>
            <fullName evidence="1">CCA tRNA nucleotidyltransferase</fullName>
        </alternativeName>
        <alternativeName>
            <fullName evidence="1">tRNA CCA-pyrophosphorylase</fullName>
        </alternativeName>
        <alternativeName>
            <fullName evidence="1">tRNA adenylyl-/cytidylyl-transferase</fullName>
        </alternativeName>
        <alternativeName>
            <fullName evidence="1">tRNA nucleotidyltransferase</fullName>
        </alternativeName>
        <alternativeName>
            <fullName evidence="1">tRNA-NT</fullName>
        </alternativeName>
    </domain>
    <domain>
        <recommendedName>
            <fullName evidence="1">2'-nucleotidase</fullName>
            <ecNumber evidence="1">3.1.3.-</ecNumber>
        </recommendedName>
    </domain>
    <domain>
        <recommendedName>
            <fullName evidence="1">2',3'-cyclic phosphodiesterase</fullName>
            <ecNumber evidence="1">3.1.4.-</ecNumber>
        </recommendedName>
    </domain>
    <domain>
        <recommendedName>
            <fullName evidence="1">Phosphatase</fullName>
            <ecNumber evidence="1">3.1.3.-</ecNumber>
        </recommendedName>
    </domain>
</protein>
<proteinExistence type="inferred from homology"/>
<reference key="1">
    <citation type="journal article" date="2005" name="Nucleic Acids Res.">
        <title>Genome dynamics and diversity of Shigella species, the etiologic agents of bacillary dysentery.</title>
        <authorList>
            <person name="Yang F."/>
            <person name="Yang J."/>
            <person name="Zhang X."/>
            <person name="Chen L."/>
            <person name="Jiang Y."/>
            <person name="Yan Y."/>
            <person name="Tang X."/>
            <person name="Wang J."/>
            <person name="Xiong Z."/>
            <person name="Dong J."/>
            <person name="Xue Y."/>
            <person name="Zhu Y."/>
            <person name="Xu X."/>
            <person name="Sun L."/>
            <person name="Chen S."/>
            <person name="Nie H."/>
            <person name="Peng J."/>
            <person name="Xu J."/>
            <person name="Wang Y."/>
            <person name="Yuan Z."/>
            <person name="Wen Y."/>
            <person name="Yao Z."/>
            <person name="Shen Y."/>
            <person name="Qiang B."/>
            <person name="Hou Y."/>
            <person name="Yu J."/>
            <person name="Jin Q."/>
        </authorList>
    </citation>
    <scope>NUCLEOTIDE SEQUENCE [LARGE SCALE GENOMIC DNA]</scope>
    <source>
        <strain>Ss046</strain>
    </source>
</reference>
<accession>Q3YXI6</accession>
<name>CCA_SHISS</name>
<keyword id="KW-0067">ATP-binding</keyword>
<keyword id="KW-0378">Hydrolase</keyword>
<keyword id="KW-0460">Magnesium</keyword>
<keyword id="KW-0479">Metal-binding</keyword>
<keyword id="KW-0511">Multifunctional enzyme</keyword>
<keyword id="KW-0533">Nickel</keyword>
<keyword id="KW-0547">Nucleotide-binding</keyword>
<keyword id="KW-0548">Nucleotidyltransferase</keyword>
<keyword id="KW-1185">Reference proteome</keyword>
<keyword id="KW-0692">RNA repair</keyword>
<keyword id="KW-0694">RNA-binding</keyword>
<keyword id="KW-0808">Transferase</keyword>
<keyword id="KW-0819">tRNA processing</keyword>
<comment type="function">
    <text evidence="1">Catalyzes the addition and repair of the essential 3'-terminal CCA sequence in tRNAs without using a nucleic acid template. Adds these three nucleotides in the order of C, C, and A to the tRNA nucleotide-73, using CTP and ATP as substrates and producing inorganic pyrophosphate. tRNA 3'-terminal CCA addition is required both for tRNA processing and repair. Also involved in tRNA surveillance by mediating tandem CCA addition to generate a CCACCA at the 3' terminus of unstable tRNAs. While stable tRNAs receive only 3'-terminal CCA, unstable tRNAs are marked with CCACCA and rapidly degraded.</text>
</comment>
<comment type="catalytic activity">
    <reaction evidence="1">
        <text>a tRNA precursor + 2 CTP + ATP = a tRNA with a 3' CCA end + 3 diphosphate</text>
        <dbReference type="Rhea" id="RHEA:14433"/>
        <dbReference type="Rhea" id="RHEA-COMP:10465"/>
        <dbReference type="Rhea" id="RHEA-COMP:10468"/>
        <dbReference type="ChEBI" id="CHEBI:30616"/>
        <dbReference type="ChEBI" id="CHEBI:33019"/>
        <dbReference type="ChEBI" id="CHEBI:37563"/>
        <dbReference type="ChEBI" id="CHEBI:74896"/>
        <dbReference type="ChEBI" id="CHEBI:83071"/>
        <dbReference type="EC" id="2.7.7.72"/>
    </reaction>
</comment>
<comment type="catalytic activity">
    <reaction evidence="1">
        <text>a tRNA with a 3' CCA end + 2 CTP + ATP = a tRNA with a 3' CCACCA end + 3 diphosphate</text>
        <dbReference type="Rhea" id="RHEA:76235"/>
        <dbReference type="Rhea" id="RHEA-COMP:10468"/>
        <dbReference type="Rhea" id="RHEA-COMP:18655"/>
        <dbReference type="ChEBI" id="CHEBI:30616"/>
        <dbReference type="ChEBI" id="CHEBI:33019"/>
        <dbReference type="ChEBI" id="CHEBI:37563"/>
        <dbReference type="ChEBI" id="CHEBI:83071"/>
        <dbReference type="ChEBI" id="CHEBI:195187"/>
    </reaction>
    <physiologicalReaction direction="left-to-right" evidence="1">
        <dbReference type="Rhea" id="RHEA:76236"/>
    </physiologicalReaction>
</comment>
<comment type="cofactor">
    <cofactor evidence="1">
        <name>Mg(2+)</name>
        <dbReference type="ChEBI" id="CHEBI:18420"/>
    </cofactor>
    <text evidence="1">Magnesium is required for nucleotidyltransferase activity.</text>
</comment>
<comment type="cofactor">
    <cofactor evidence="1">
        <name>Ni(2+)</name>
        <dbReference type="ChEBI" id="CHEBI:49786"/>
    </cofactor>
    <text evidence="1">Nickel for phosphatase activity.</text>
</comment>
<comment type="subunit">
    <text evidence="1">Monomer. Can also form homodimers and oligomers.</text>
</comment>
<comment type="domain">
    <text evidence="1">Comprises two domains: an N-terminal domain containing the nucleotidyltransferase activity and a C-terminal HD domain associated with both phosphodiesterase and phosphatase activities.</text>
</comment>
<comment type="miscellaneous">
    <text evidence="1">A single active site specifically recognizes both ATP and CTP and is responsible for their addition.</text>
</comment>
<comment type="similarity">
    <text evidence="1">Belongs to the tRNA nucleotidyltransferase/poly(A) polymerase family. Bacterial CCA-adding enzyme type 1 subfamily.</text>
</comment>
<evidence type="ECO:0000255" key="1">
    <source>
        <dbReference type="HAMAP-Rule" id="MF_01261"/>
    </source>
</evidence>
<organism>
    <name type="scientific">Shigella sonnei (strain Ss046)</name>
    <dbReference type="NCBI Taxonomy" id="300269"/>
    <lineage>
        <taxon>Bacteria</taxon>
        <taxon>Pseudomonadati</taxon>
        <taxon>Pseudomonadota</taxon>
        <taxon>Gammaproteobacteria</taxon>
        <taxon>Enterobacterales</taxon>
        <taxon>Enterobacteriaceae</taxon>
        <taxon>Shigella</taxon>
    </lineage>
</organism>
<feature type="chain" id="PRO_1000054302" description="Multifunctional CCA protein">
    <location>
        <begin position="1"/>
        <end position="412"/>
    </location>
</feature>
<feature type="domain" description="HD" evidence="1">
    <location>
        <begin position="228"/>
        <end position="329"/>
    </location>
</feature>
<feature type="binding site" evidence="1">
    <location>
        <position position="8"/>
    </location>
    <ligand>
        <name>ATP</name>
        <dbReference type="ChEBI" id="CHEBI:30616"/>
    </ligand>
</feature>
<feature type="binding site" evidence="1">
    <location>
        <position position="8"/>
    </location>
    <ligand>
        <name>CTP</name>
        <dbReference type="ChEBI" id="CHEBI:37563"/>
    </ligand>
</feature>
<feature type="binding site" evidence="1">
    <location>
        <position position="11"/>
    </location>
    <ligand>
        <name>ATP</name>
        <dbReference type="ChEBI" id="CHEBI:30616"/>
    </ligand>
</feature>
<feature type="binding site" evidence="1">
    <location>
        <position position="11"/>
    </location>
    <ligand>
        <name>CTP</name>
        <dbReference type="ChEBI" id="CHEBI:37563"/>
    </ligand>
</feature>
<feature type="binding site" evidence="1">
    <location>
        <position position="21"/>
    </location>
    <ligand>
        <name>Mg(2+)</name>
        <dbReference type="ChEBI" id="CHEBI:18420"/>
    </ligand>
</feature>
<feature type="binding site" evidence="1">
    <location>
        <position position="23"/>
    </location>
    <ligand>
        <name>Mg(2+)</name>
        <dbReference type="ChEBI" id="CHEBI:18420"/>
    </ligand>
</feature>
<feature type="binding site" evidence="1">
    <location>
        <position position="91"/>
    </location>
    <ligand>
        <name>ATP</name>
        <dbReference type="ChEBI" id="CHEBI:30616"/>
    </ligand>
</feature>
<feature type="binding site" evidence="1">
    <location>
        <position position="91"/>
    </location>
    <ligand>
        <name>CTP</name>
        <dbReference type="ChEBI" id="CHEBI:37563"/>
    </ligand>
</feature>
<feature type="binding site" evidence="1">
    <location>
        <position position="137"/>
    </location>
    <ligand>
        <name>ATP</name>
        <dbReference type="ChEBI" id="CHEBI:30616"/>
    </ligand>
</feature>
<feature type="binding site" evidence="1">
    <location>
        <position position="137"/>
    </location>
    <ligand>
        <name>CTP</name>
        <dbReference type="ChEBI" id="CHEBI:37563"/>
    </ligand>
</feature>
<feature type="binding site" evidence="1">
    <location>
        <position position="140"/>
    </location>
    <ligand>
        <name>ATP</name>
        <dbReference type="ChEBI" id="CHEBI:30616"/>
    </ligand>
</feature>
<feature type="binding site" evidence="1">
    <location>
        <position position="140"/>
    </location>
    <ligand>
        <name>CTP</name>
        <dbReference type="ChEBI" id="CHEBI:37563"/>
    </ligand>
</feature>
<dbReference type="EC" id="2.7.7.72" evidence="1"/>
<dbReference type="EC" id="3.1.3.-" evidence="1"/>
<dbReference type="EC" id="3.1.4.-" evidence="1"/>
<dbReference type="EMBL" id="CP000038">
    <property type="protein sequence ID" value="AAZ89776.1"/>
    <property type="molecule type" value="Genomic_DNA"/>
</dbReference>
<dbReference type="RefSeq" id="WP_000708437.1">
    <property type="nucleotide sequence ID" value="NC_007384.1"/>
</dbReference>
<dbReference type="SMR" id="Q3YXI6"/>
<dbReference type="GeneID" id="93778937"/>
<dbReference type="KEGG" id="ssn:SSON_3193"/>
<dbReference type="HOGENOM" id="CLU_015961_1_1_6"/>
<dbReference type="Proteomes" id="UP000002529">
    <property type="component" value="Chromosome"/>
</dbReference>
<dbReference type="GO" id="GO:0005524">
    <property type="term" value="F:ATP binding"/>
    <property type="evidence" value="ECO:0007669"/>
    <property type="project" value="UniProtKB-UniRule"/>
</dbReference>
<dbReference type="GO" id="GO:0004810">
    <property type="term" value="F:CCA tRNA nucleotidyltransferase activity"/>
    <property type="evidence" value="ECO:0007669"/>
    <property type="project" value="UniProtKB-UniRule"/>
</dbReference>
<dbReference type="GO" id="GO:0004112">
    <property type="term" value="F:cyclic-nucleotide phosphodiesterase activity"/>
    <property type="evidence" value="ECO:0007669"/>
    <property type="project" value="UniProtKB-UniRule"/>
</dbReference>
<dbReference type="GO" id="GO:0000287">
    <property type="term" value="F:magnesium ion binding"/>
    <property type="evidence" value="ECO:0007669"/>
    <property type="project" value="UniProtKB-UniRule"/>
</dbReference>
<dbReference type="GO" id="GO:0016791">
    <property type="term" value="F:phosphatase activity"/>
    <property type="evidence" value="ECO:0007669"/>
    <property type="project" value="UniProtKB-UniRule"/>
</dbReference>
<dbReference type="GO" id="GO:0000049">
    <property type="term" value="F:tRNA binding"/>
    <property type="evidence" value="ECO:0007669"/>
    <property type="project" value="UniProtKB-UniRule"/>
</dbReference>
<dbReference type="GO" id="GO:0042245">
    <property type="term" value="P:RNA repair"/>
    <property type="evidence" value="ECO:0007669"/>
    <property type="project" value="UniProtKB-KW"/>
</dbReference>
<dbReference type="GO" id="GO:0001680">
    <property type="term" value="P:tRNA 3'-terminal CCA addition"/>
    <property type="evidence" value="ECO:0007669"/>
    <property type="project" value="UniProtKB-UniRule"/>
</dbReference>
<dbReference type="CDD" id="cd00077">
    <property type="entry name" value="HDc"/>
    <property type="match status" value="1"/>
</dbReference>
<dbReference type="CDD" id="cd05398">
    <property type="entry name" value="NT_ClassII-CCAase"/>
    <property type="match status" value="1"/>
</dbReference>
<dbReference type="FunFam" id="1.10.3090.10:FF:000001">
    <property type="entry name" value="Multifunctional CCA protein"/>
    <property type="match status" value="1"/>
</dbReference>
<dbReference type="FunFam" id="3.30.460.10:FF:000016">
    <property type="entry name" value="Multifunctional CCA protein"/>
    <property type="match status" value="1"/>
</dbReference>
<dbReference type="Gene3D" id="3.30.460.10">
    <property type="entry name" value="Beta Polymerase, domain 2"/>
    <property type="match status" value="1"/>
</dbReference>
<dbReference type="Gene3D" id="1.10.3090.10">
    <property type="entry name" value="cca-adding enzyme, domain 2"/>
    <property type="match status" value="1"/>
</dbReference>
<dbReference type="HAMAP" id="MF_01261">
    <property type="entry name" value="CCA_bact_type1"/>
    <property type="match status" value="1"/>
</dbReference>
<dbReference type="HAMAP" id="MF_01262">
    <property type="entry name" value="CCA_bact_type2"/>
    <property type="match status" value="1"/>
</dbReference>
<dbReference type="InterPro" id="IPR012006">
    <property type="entry name" value="CCA_bact"/>
</dbReference>
<dbReference type="InterPro" id="IPR003607">
    <property type="entry name" value="HD/PDEase_dom"/>
</dbReference>
<dbReference type="InterPro" id="IPR006674">
    <property type="entry name" value="HD_domain"/>
</dbReference>
<dbReference type="InterPro" id="IPR043519">
    <property type="entry name" value="NT_sf"/>
</dbReference>
<dbReference type="InterPro" id="IPR002646">
    <property type="entry name" value="PolA_pol_head_dom"/>
</dbReference>
<dbReference type="InterPro" id="IPR032828">
    <property type="entry name" value="PolyA_RNA-bd"/>
</dbReference>
<dbReference type="InterPro" id="IPR050124">
    <property type="entry name" value="tRNA_CCA-adding_enzyme"/>
</dbReference>
<dbReference type="NCBIfam" id="NF008137">
    <property type="entry name" value="PRK10885.1"/>
    <property type="match status" value="1"/>
</dbReference>
<dbReference type="PANTHER" id="PTHR47545">
    <property type="entry name" value="MULTIFUNCTIONAL CCA PROTEIN"/>
    <property type="match status" value="1"/>
</dbReference>
<dbReference type="PANTHER" id="PTHR47545:SF1">
    <property type="entry name" value="MULTIFUNCTIONAL CCA PROTEIN"/>
    <property type="match status" value="1"/>
</dbReference>
<dbReference type="Pfam" id="PF01966">
    <property type="entry name" value="HD"/>
    <property type="match status" value="1"/>
</dbReference>
<dbReference type="Pfam" id="PF01743">
    <property type="entry name" value="PolyA_pol"/>
    <property type="match status" value="1"/>
</dbReference>
<dbReference type="Pfam" id="PF12627">
    <property type="entry name" value="PolyA_pol_RNAbd"/>
    <property type="match status" value="1"/>
</dbReference>
<dbReference type="PIRSF" id="PIRSF000813">
    <property type="entry name" value="CCA_bact"/>
    <property type="match status" value="1"/>
</dbReference>
<dbReference type="SUPFAM" id="SSF81301">
    <property type="entry name" value="Nucleotidyltransferase"/>
    <property type="match status" value="1"/>
</dbReference>
<dbReference type="SUPFAM" id="SSF81891">
    <property type="entry name" value="Poly A polymerase C-terminal region-like"/>
    <property type="match status" value="1"/>
</dbReference>
<dbReference type="PROSITE" id="PS51831">
    <property type="entry name" value="HD"/>
    <property type="match status" value="1"/>
</dbReference>
<sequence length="412" mass="46583">MKIYLVGGAIRDALLGLPVKDRDWVVVGSTPQEMLDAGYQQVGRDFPVFLHPQTHEEYALARTERKSGSGYTDFTCYAAPDVTLEDDLKRRDLTINALAQDDNGEIIDPYNGLGDLQNRLLRHVSPAFGEDPLRVLRVARFAARYAHLGFRIADETLTLMREMTHAGELEHLTPERVWKETESALTTRNPQVFFQVLRDCGALRVLFPEIDALFGVPAPARWHPEIDTGIHTLMTLSMAAMLSPQVDVRFATLCHDLGKGLTPPELWPRHHGHGPAGVKLVEQLCQRLRVPNEIRDLARLVAEFHDLIHTFPMLNPKTIVKLFDSIDAWRKPQRVEQLALTSEADVRGRTGFESADYPQGRWLREAWEVAQSVPTKAVVEAGFKGVEIREELTRRRIAAVASWKEQRCPKPD</sequence>
<gene>
    <name evidence="1" type="primary">cca</name>
    <name type="ordered locus">SSON_3193</name>
</gene>